<gene>
    <name evidence="1" type="primary">nadK2</name>
    <name type="ordered locus">BA_4893</name>
    <name type="ordered locus">GBAA_4893</name>
    <name type="ordered locus">BAS4540</name>
</gene>
<name>NADK2_BACAN</name>
<comment type="function">
    <text evidence="1">Involved in the regulation of the intracellular balance of NAD and NADP, and is a key enzyme in the biosynthesis of NADP. Catalyzes specifically the phosphorylation on 2'-hydroxyl of the adenosine moiety of NAD to yield NADP.</text>
</comment>
<comment type="catalytic activity">
    <reaction evidence="1">
        <text>NAD(+) + ATP = ADP + NADP(+) + H(+)</text>
        <dbReference type="Rhea" id="RHEA:18629"/>
        <dbReference type="ChEBI" id="CHEBI:15378"/>
        <dbReference type="ChEBI" id="CHEBI:30616"/>
        <dbReference type="ChEBI" id="CHEBI:57540"/>
        <dbReference type="ChEBI" id="CHEBI:58349"/>
        <dbReference type="ChEBI" id="CHEBI:456216"/>
        <dbReference type="EC" id="2.7.1.23"/>
    </reaction>
</comment>
<comment type="cofactor">
    <cofactor evidence="1">
        <name>a divalent metal cation</name>
        <dbReference type="ChEBI" id="CHEBI:60240"/>
    </cofactor>
</comment>
<comment type="subcellular location">
    <subcellularLocation>
        <location evidence="1">Cytoplasm</location>
    </subcellularLocation>
</comment>
<comment type="similarity">
    <text evidence="1">Belongs to the NAD kinase family.</text>
</comment>
<keyword id="KW-0067">ATP-binding</keyword>
<keyword id="KW-0963">Cytoplasm</keyword>
<keyword id="KW-0418">Kinase</keyword>
<keyword id="KW-0520">NAD</keyword>
<keyword id="KW-0521">NADP</keyword>
<keyword id="KW-0547">Nucleotide-binding</keyword>
<keyword id="KW-1185">Reference proteome</keyword>
<keyword id="KW-0808">Transferase</keyword>
<feature type="chain" id="PRO_0000120592" description="NAD kinase 2">
    <location>
        <begin position="1"/>
        <end position="267"/>
    </location>
</feature>
<feature type="active site" description="Proton acceptor" evidence="1">
    <location>
        <position position="52"/>
    </location>
</feature>
<feature type="binding site" evidence="1">
    <location>
        <begin position="52"/>
        <end position="53"/>
    </location>
    <ligand>
        <name>NAD(+)</name>
        <dbReference type="ChEBI" id="CHEBI:57540"/>
    </ligand>
</feature>
<feature type="binding site" evidence="1">
    <location>
        <begin position="124"/>
        <end position="125"/>
    </location>
    <ligand>
        <name>NAD(+)</name>
        <dbReference type="ChEBI" id="CHEBI:57540"/>
    </ligand>
</feature>
<feature type="binding site" evidence="1">
    <location>
        <position position="151"/>
    </location>
    <ligand>
        <name>NAD(+)</name>
        <dbReference type="ChEBI" id="CHEBI:57540"/>
    </ligand>
</feature>
<feature type="binding site" evidence="1">
    <location>
        <position position="153"/>
    </location>
    <ligand>
        <name>NAD(+)</name>
        <dbReference type="ChEBI" id="CHEBI:57540"/>
    </ligand>
</feature>
<feature type="binding site" evidence="1">
    <location>
        <begin position="164"/>
        <end position="169"/>
    </location>
    <ligand>
        <name>NAD(+)</name>
        <dbReference type="ChEBI" id="CHEBI:57540"/>
    </ligand>
</feature>
<feature type="binding site" evidence="1">
    <location>
        <position position="188"/>
    </location>
    <ligand>
        <name>NAD(+)</name>
        <dbReference type="ChEBI" id="CHEBI:57540"/>
    </ligand>
</feature>
<proteinExistence type="inferred from homology"/>
<accession>Q81KU5</accession>
<accession>Q6HSA1</accession>
<accession>Q6KLJ8</accession>
<protein>
    <recommendedName>
        <fullName evidence="1">NAD kinase 2</fullName>
        <ecNumber evidence="1">2.7.1.23</ecNumber>
    </recommendedName>
    <alternativeName>
        <fullName evidence="1">ATP-dependent NAD kinase 2</fullName>
    </alternativeName>
</protein>
<sequence>MADRRNLFFFYGDDKAKLVEKMKPIYRILEENGFTILDHPKNANAIVSVGDDATFLQAVRKTGFREDCLYAGISTKDEISFYCDFHIDHVDTALQEITKNEIEVRKYPTIEVDVDGSTSFHCLNEFSLRSSIIKTFVVDVHVDDLYFETFRGDGLVVSTPTGSTAYNKSLRGAVVDPLIPCFQVSELASLNNNTYRTLGSPFILNHERTLTLKLRPDGNDYPVIGMDNEALSIKQVEKAVVRLSDKQIKTVKLKNNSFWEKVQRTFL</sequence>
<organism>
    <name type="scientific">Bacillus anthracis</name>
    <dbReference type="NCBI Taxonomy" id="1392"/>
    <lineage>
        <taxon>Bacteria</taxon>
        <taxon>Bacillati</taxon>
        <taxon>Bacillota</taxon>
        <taxon>Bacilli</taxon>
        <taxon>Bacillales</taxon>
        <taxon>Bacillaceae</taxon>
        <taxon>Bacillus</taxon>
        <taxon>Bacillus cereus group</taxon>
    </lineage>
</organism>
<evidence type="ECO:0000255" key="1">
    <source>
        <dbReference type="HAMAP-Rule" id="MF_00361"/>
    </source>
</evidence>
<dbReference type="EC" id="2.7.1.23" evidence="1"/>
<dbReference type="EMBL" id="AE016879">
    <property type="protein sequence ID" value="AAP28579.1"/>
    <property type="molecule type" value="Genomic_DNA"/>
</dbReference>
<dbReference type="EMBL" id="AE017334">
    <property type="protein sequence ID" value="AAT34012.1"/>
    <property type="molecule type" value="Genomic_DNA"/>
</dbReference>
<dbReference type="EMBL" id="AE017225">
    <property type="protein sequence ID" value="AAT56837.1"/>
    <property type="molecule type" value="Genomic_DNA"/>
</dbReference>
<dbReference type="RefSeq" id="NP_847093.1">
    <property type="nucleotide sequence ID" value="NC_003997.3"/>
</dbReference>
<dbReference type="RefSeq" id="WP_000785168.1">
    <property type="nucleotide sequence ID" value="NZ_WXXJ01000026.1"/>
</dbReference>
<dbReference type="RefSeq" id="YP_030787.1">
    <property type="nucleotide sequence ID" value="NC_005945.1"/>
</dbReference>
<dbReference type="SMR" id="Q81KU5"/>
<dbReference type="STRING" id="261594.GBAA_4893"/>
<dbReference type="DNASU" id="1086739"/>
<dbReference type="KEGG" id="ban:BA_4893"/>
<dbReference type="KEGG" id="banh:HYU01_23845"/>
<dbReference type="KEGG" id="bar:GBAA_4893"/>
<dbReference type="KEGG" id="bat:BAS4540"/>
<dbReference type="PATRIC" id="fig|198094.11.peg.4854"/>
<dbReference type="eggNOG" id="COG0061">
    <property type="taxonomic scope" value="Bacteria"/>
</dbReference>
<dbReference type="HOGENOM" id="CLU_008831_0_3_9"/>
<dbReference type="OMA" id="KDNSFWE"/>
<dbReference type="OrthoDB" id="9774737at2"/>
<dbReference type="Proteomes" id="UP000000427">
    <property type="component" value="Chromosome"/>
</dbReference>
<dbReference type="Proteomes" id="UP000000594">
    <property type="component" value="Chromosome"/>
</dbReference>
<dbReference type="GO" id="GO:0005737">
    <property type="term" value="C:cytoplasm"/>
    <property type="evidence" value="ECO:0007669"/>
    <property type="project" value="UniProtKB-SubCell"/>
</dbReference>
<dbReference type="GO" id="GO:0005524">
    <property type="term" value="F:ATP binding"/>
    <property type="evidence" value="ECO:0007669"/>
    <property type="project" value="UniProtKB-KW"/>
</dbReference>
<dbReference type="GO" id="GO:0046872">
    <property type="term" value="F:metal ion binding"/>
    <property type="evidence" value="ECO:0007669"/>
    <property type="project" value="UniProtKB-UniRule"/>
</dbReference>
<dbReference type="GO" id="GO:0051287">
    <property type="term" value="F:NAD binding"/>
    <property type="evidence" value="ECO:0007669"/>
    <property type="project" value="UniProtKB-ARBA"/>
</dbReference>
<dbReference type="GO" id="GO:0003951">
    <property type="term" value="F:NAD+ kinase activity"/>
    <property type="evidence" value="ECO:0007669"/>
    <property type="project" value="UniProtKB-UniRule"/>
</dbReference>
<dbReference type="GO" id="GO:0019674">
    <property type="term" value="P:NAD metabolic process"/>
    <property type="evidence" value="ECO:0007669"/>
    <property type="project" value="InterPro"/>
</dbReference>
<dbReference type="GO" id="GO:0006741">
    <property type="term" value="P:NADP biosynthetic process"/>
    <property type="evidence" value="ECO:0007669"/>
    <property type="project" value="UniProtKB-UniRule"/>
</dbReference>
<dbReference type="FunFam" id="2.60.200.30:FF:000002">
    <property type="entry name" value="NAD kinase"/>
    <property type="match status" value="1"/>
</dbReference>
<dbReference type="FunFam" id="3.40.50.10330:FF:000017">
    <property type="entry name" value="NAD kinase"/>
    <property type="match status" value="1"/>
</dbReference>
<dbReference type="Gene3D" id="3.40.50.10330">
    <property type="entry name" value="Probable inorganic polyphosphate/atp-NAD kinase, domain 1"/>
    <property type="match status" value="1"/>
</dbReference>
<dbReference type="Gene3D" id="2.60.200.30">
    <property type="entry name" value="Probable inorganic polyphosphate/atp-NAD kinase, domain 2"/>
    <property type="match status" value="1"/>
</dbReference>
<dbReference type="HAMAP" id="MF_00361">
    <property type="entry name" value="NAD_kinase"/>
    <property type="match status" value="1"/>
</dbReference>
<dbReference type="InterPro" id="IPR017438">
    <property type="entry name" value="ATP-NAD_kinase_N"/>
</dbReference>
<dbReference type="InterPro" id="IPR017437">
    <property type="entry name" value="ATP-NAD_kinase_PpnK-typ_C"/>
</dbReference>
<dbReference type="InterPro" id="IPR016064">
    <property type="entry name" value="NAD/diacylglycerol_kinase_sf"/>
</dbReference>
<dbReference type="InterPro" id="IPR002504">
    <property type="entry name" value="NADK"/>
</dbReference>
<dbReference type="NCBIfam" id="NF002902">
    <property type="entry name" value="PRK03501.1"/>
    <property type="match status" value="1"/>
</dbReference>
<dbReference type="PANTHER" id="PTHR20275">
    <property type="entry name" value="NAD KINASE"/>
    <property type="match status" value="1"/>
</dbReference>
<dbReference type="PANTHER" id="PTHR20275:SF9">
    <property type="entry name" value="NAD KINASE 2"/>
    <property type="match status" value="1"/>
</dbReference>
<dbReference type="Pfam" id="PF20143">
    <property type="entry name" value="NAD_kinase_C"/>
    <property type="match status" value="1"/>
</dbReference>
<dbReference type="SUPFAM" id="SSF111331">
    <property type="entry name" value="NAD kinase/diacylglycerol kinase-like"/>
    <property type="match status" value="1"/>
</dbReference>
<reference key="1">
    <citation type="journal article" date="2003" name="Nature">
        <title>The genome sequence of Bacillus anthracis Ames and comparison to closely related bacteria.</title>
        <authorList>
            <person name="Read T.D."/>
            <person name="Peterson S.N."/>
            <person name="Tourasse N.J."/>
            <person name="Baillie L.W."/>
            <person name="Paulsen I.T."/>
            <person name="Nelson K.E."/>
            <person name="Tettelin H."/>
            <person name="Fouts D.E."/>
            <person name="Eisen J.A."/>
            <person name="Gill S.R."/>
            <person name="Holtzapple E.K."/>
            <person name="Okstad O.A."/>
            <person name="Helgason E."/>
            <person name="Rilstone J."/>
            <person name="Wu M."/>
            <person name="Kolonay J.F."/>
            <person name="Beanan M.J."/>
            <person name="Dodson R.J."/>
            <person name="Brinkac L.M."/>
            <person name="Gwinn M.L."/>
            <person name="DeBoy R.T."/>
            <person name="Madpu R."/>
            <person name="Daugherty S.C."/>
            <person name="Durkin A.S."/>
            <person name="Haft D.H."/>
            <person name="Nelson W.C."/>
            <person name="Peterson J.D."/>
            <person name="Pop M."/>
            <person name="Khouri H.M."/>
            <person name="Radune D."/>
            <person name="Benton J.L."/>
            <person name="Mahamoud Y."/>
            <person name="Jiang L."/>
            <person name="Hance I.R."/>
            <person name="Weidman J.F."/>
            <person name="Berry K.J."/>
            <person name="Plaut R.D."/>
            <person name="Wolf A.M."/>
            <person name="Watkins K.L."/>
            <person name="Nierman W.C."/>
            <person name="Hazen A."/>
            <person name="Cline R.T."/>
            <person name="Redmond C."/>
            <person name="Thwaite J.E."/>
            <person name="White O."/>
            <person name="Salzberg S.L."/>
            <person name="Thomason B."/>
            <person name="Friedlander A.M."/>
            <person name="Koehler T.M."/>
            <person name="Hanna P.C."/>
            <person name="Kolstoe A.-B."/>
            <person name="Fraser C.M."/>
        </authorList>
    </citation>
    <scope>NUCLEOTIDE SEQUENCE [LARGE SCALE GENOMIC DNA]</scope>
    <source>
        <strain>Ames / isolate Porton</strain>
    </source>
</reference>
<reference key="2">
    <citation type="journal article" date="2009" name="J. Bacteriol.">
        <title>The complete genome sequence of Bacillus anthracis Ames 'Ancestor'.</title>
        <authorList>
            <person name="Ravel J."/>
            <person name="Jiang L."/>
            <person name="Stanley S.T."/>
            <person name="Wilson M.R."/>
            <person name="Decker R.S."/>
            <person name="Read T.D."/>
            <person name="Worsham P."/>
            <person name="Keim P.S."/>
            <person name="Salzberg S.L."/>
            <person name="Fraser-Liggett C.M."/>
            <person name="Rasko D.A."/>
        </authorList>
    </citation>
    <scope>NUCLEOTIDE SEQUENCE [LARGE SCALE GENOMIC DNA]</scope>
    <source>
        <strain>Ames ancestor</strain>
    </source>
</reference>
<reference key="3">
    <citation type="submission" date="2004-01" db="EMBL/GenBank/DDBJ databases">
        <title>Complete genome sequence of Bacillus anthracis Sterne.</title>
        <authorList>
            <person name="Brettin T.S."/>
            <person name="Bruce D."/>
            <person name="Challacombe J.F."/>
            <person name="Gilna P."/>
            <person name="Han C."/>
            <person name="Hill K."/>
            <person name="Hitchcock P."/>
            <person name="Jackson P."/>
            <person name="Keim P."/>
            <person name="Longmire J."/>
            <person name="Lucas S."/>
            <person name="Okinaka R."/>
            <person name="Richardson P."/>
            <person name="Rubin E."/>
            <person name="Tice H."/>
        </authorList>
    </citation>
    <scope>NUCLEOTIDE SEQUENCE [LARGE SCALE GENOMIC DNA]</scope>
    <source>
        <strain>Sterne</strain>
    </source>
</reference>